<gene>
    <name evidence="9" type="primary">CSS1</name>
    <name type="synonym">HPF1'</name>
    <name type="ordered locus">YIL169C</name>
    <name type="ORF">YI9402.07C</name>
</gene>
<keyword id="KW-0325">Glycoprotein</keyword>
<keyword id="KW-1185">Reference proteome</keyword>
<keyword id="KW-0964">Secreted</keyword>
<keyword id="KW-0732">Signal</keyword>
<evidence type="ECO:0000255" key="1"/>
<evidence type="ECO:0000255" key="2">
    <source>
        <dbReference type="PROSITE-ProRule" id="PRU00284"/>
    </source>
</evidence>
<evidence type="ECO:0000256" key="3">
    <source>
        <dbReference type="SAM" id="MobiDB-lite"/>
    </source>
</evidence>
<evidence type="ECO:0000269" key="4">
    <source>
    </source>
</evidence>
<evidence type="ECO:0000269" key="5">
    <source>
    </source>
</evidence>
<evidence type="ECO:0000269" key="6">
    <source>
    </source>
</evidence>
<evidence type="ECO:0000269" key="7">
    <source>
    </source>
</evidence>
<evidence type="ECO:0000303" key="8">
    <source>
    </source>
</evidence>
<evidence type="ECO:0000303" key="9">
    <source>
    </source>
</evidence>
<evidence type="ECO:0000305" key="10"/>
<feature type="signal peptide" evidence="1">
    <location>
        <begin position="1"/>
        <end position="23"/>
    </location>
</feature>
<feature type="chain" id="PRO_0000014330" description="Secreted protein CSS1">
    <location>
        <begin position="24"/>
        <end position="995"/>
    </location>
</feature>
<feature type="domain" description="Methyl-accepting transducer" evidence="2">
    <location>
        <begin position="26"/>
        <end position="253"/>
    </location>
</feature>
<feature type="region of interest" description="Disordered" evidence="3">
    <location>
        <begin position="98"/>
        <end position="276"/>
    </location>
</feature>
<feature type="glycosylation site" description="N-linked (GlcNAc...) asparagine" evidence="1">
    <location>
        <position position="28"/>
    </location>
</feature>
<feature type="glycosylation site" description="N-linked (GlcNAc...) asparagine" evidence="1">
    <location>
        <position position="35"/>
    </location>
</feature>
<feature type="glycosylation site" description="N-linked (GlcNAc...) asparagine" evidence="1">
    <location>
        <position position="468"/>
    </location>
</feature>
<feature type="glycosylation site" description="N-linked (GlcNAc...) asparagine" evidence="1">
    <location>
        <position position="664"/>
    </location>
</feature>
<protein>
    <recommendedName>
        <fullName evidence="9">Secreted protein CSS1</fullName>
    </recommendedName>
    <alternativeName>
        <fullName evidence="9">Condition specific secretion protein 1</fullName>
    </alternativeName>
    <alternativeName>
        <fullName evidence="8">Haze protective factor 1'</fullName>
    </alternativeName>
</protein>
<dbReference type="EMBL" id="Z46921">
    <property type="protein sequence ID" value="CAA87023.1"/>
    <property type="molecule type" value="Genomic_DNA"/>
</dbReference>
<dbReference type="EMBL" id="BK006942">
    <property type="protein sequence ID" value="DAA08386.1"/>
    <property type="molecule type" value="Genomic_DNA"/>
</dbReference>
<dbReference type="PIR" id="S50358">
    <property type="entry name" value="S50358"/>
</dbReference>
<dbReference type="RefSeq" id="NP_012097.1">
    <property type="nucleotide sequence ID" value="NM_001179517.1"/>
</dbReference>
<dbReference type="SMR" id="P40442"/>
<dbReference type="BioGRID" id="34825">
    <property type="interactions" value="21"/>
</dbReference>
<dbReference type="DIP" id="DIP-3929N"/>
<dbReference type="FunCoup" id="P40442">
    <property type="interactions" value="82"/>
</dbReference>
<dbReference type="IntAct" id="P40442">
    <property type="interactions" value="2"/>
</dbReference>
<dbReference type="MINT" id="P40442"/>
<dbReference type="STRING" id="4932.YIL169C"/>
<dbReference type="CarbonylDB" id="P40442"/>
<dbReference type="GlyCosmos" id="P40442">
    <property type="glycosylation" value="4 sites, No reported glycans"/>
</dbReference>
<dbReference type="GlyGen" id="P40442">
    <property type="glycosylation" value="4 sites"/>
</dbReference>
<dbReference type="iPTMnet" id="P40442"/>
<dbReference type="PaxDb" id="4932-YIL169C"/>
<dbReference type="PeptideAtlas" id="P40442"/>
<dbReference type="EnsemblFungi" id="YIL169C_mRNA">
    <property type="protein sequence ID" value="YIL169C"/>
    <property type="gene ID" value="YIL169C"/>
</dbReference>
<dbReference type="GeneID" id="854637"/>
<dbReference type="KEGG" id="sce:YIL169C"/>
<dbReference type="AGR" id="SGD:S000001431"/>
<dbReference type="SGD" id="S000001431">
    <property type="gene designation" value="CSS1"/>
</dbReference>
<dbReference type="VEuPathDB" id="FungiDB:YIL169C"/>
<dbReference type="eggNOG" id="KOG1216">
    <property type="taxonomic scope" value="Eukaryota"/>
</dbReference>
<dbReference type="GeneTree" id="ENSGT00940000179085"/>
<dbReference type="HOGENOM" id="CLU_016111_1_0_1"/>
<dbReference type="InParanoid" id="P40442"/>
<dbReference type="OMA" id="DNGCKTK"/>
<dbReference type="OrthoDB" id="4069261at2759"/>
<dbReference type="BioCyc" id="YEAST:G3O-31414-MONOMER"/>
<dbReference type="BioGRID-ORCS" id="854637">
    <property type="hits" value="0 hits in 10 CRISPR screens"/>
</dbReference>
<dbReference type="PRO" id="PR:P40442"/>
<dbReference type="Proteomes" id="UP000002311">
    <property type="component" value="Chromosome IX"/>
</dbReference>
<dbReference type="RNAct" id="P40442">
    <property type="molecule type" value="protein"/>
</dbReference>
<dbReference type="GO" id="GO:0071944">
    <property type="term" value="C:cell periphery"/>
    <property type="evidence" value="ECO:0007005"/>
    <property type="project" value="SGD"/>
</dbReference>
<dbReference type="GO" id="GO:0000785">
    <property type="term" value="C:chromatin"/>
    <property type="evidence" value="ECO:0000318"/>
    <property type="project" value="GO_Central"/>
</dbReference>
<dbReference type="GO" id="GO:0005576">
    <property type="term" value="C:extracellular region"/>
    <property type="evidence" value="ECO:0007005"/>
    <property type="project" value="SGD"/>
</dbReference>
<dbReference type="GO" id="GO:0009277">
    <property type="term" value="C:fungal-type cell wall"/>
    <property type="evidence" value="ECO:0007669"/>
    <property type="project" value="UniProtKB-ARBA"/>
</dbReference>
<dbReference type="GO" id="GO:0016020">
    <property type="term" value="C:membrane"/>
    <property type="evidence" value="ECO:0007669"/>
    <property type="project" value="InterPro"/>
</dbReference>
<dbReference type="GO" id="GO:0072357">
    <property type="term" value="C:PTW/PP1 phosphatase complex"/>
    <property type="evidence" value="ECO:0000318"/>
    <property type="project" value="GO_Central"/>
</dbReference>
<dbReference type="GO" id="GO:0008157">
    <property type="term" value="F:protein phosphatase 1 binding"/>
    <property type="evidence" value="ECO:0000318"/>
    <property type="project" value="GO_Central"/>
</dbReference>
<dbReference type="GO" id="GO:0061025">
    <property type="term" value="P:membrane fusion"/>
    <property type="evidence" value="ECO:0007669"/>
    <property type="project" value="UniProtKB-ARBA"/>
</dbReference>
<dbReference type="GO" id="GO:0007165">
    <property type="term" value="P:signal transduction"/>
    <property type="evidence" value="ECO:0007669"/>
    <property type="project" value="InterPro"/>
</dbReference>
<dbReference type="GO" id="GO:0016192">
    <property type="term" value="P:vesicle-mediated transport"/>
    <property type="evidence" value="ECO:0007669"/>
    <property type="project" value="UniProtKB-ARBA"/>
</dbReference>
<dbReference type="InterPro" id="IPR021031">
    <property type="entry name" value="Hyphal-reg_cell_wall_N"/>
</dbReference>
<dbReference type="InterPro" id="IPR004089">
    <property type="entry name" value="MCPsignal_dom"/>
</dbReference>
<dbReference type="InterPro" id="IPR000727">
    <property type="entry name" value="T_SNARE_dom"/>
</dbReference>
<dbReference type="PANTHER" id="PTHR46557">
    <property type="entry name" value="SERINE/THREONINE-PROTEIN PHOSPHATASE 1 REGULATORY SUBUNIT 10-RELATED"/>
    <property type="match status" value="1"/>
</dbReference>
<dbReference type="PANTHER" id="PTHR46557:SF1">
    <property type="entry name" value="SERINE_THREONINE-PROTEIN PHOSPHATASE 1 REGULATORY SUBUNIT 10"/>
    <property type="match status" value="1"/>
</dbReference>
<dbReference type="Pfam" id="PF11765">
    <property type="entry name" value="Hyphal_reg_CWP"/>
    <property type="match status" value="1"/>
</dbReference>
<dbReference type="PROSITE" id="PS50111">
    <property type="entry name" value="CHEMOTAXIS_TRANSDUC_2"/>
    <property type="match status" value="1"/>
</dbReference>
<comment type="function">
    <text evidence="6">Secreted protein that may be involved in cell wall organization and biosynthesis.</text>
</comment>
<comment type="subcellular location">
    <subcellularLocation>
        <location evidence="7">Secreted</location>
    </subcellularLocation>
</comment>
<comment type="induction">
    <text evidence="4 5">Expression is induced in both high and low pH environments.</text>
</comment>
<comment type="disruption phenotype">
    <text evidence="6">Decreases haze protective activity in white wine.</text>
</comment>
<comment type="similarity">
    <text evidence="10">Belongs to the SRP1/TIP1 family.</text>
</comment>
<accession>P40442</accession>
<accession>D6VVC0</accession>
<organism>
    <name type="scientific">Saccharomyces cerevisiae (strain ATCC 204508 / S288c)</name>
    <name type="common">Baker's yeast</name>
    <dbReference type="NCBI Taxonomy" id="559292"/>
    <lineage>
        <taxon>Eukaryota</taxon>
        <taxon>Fungi</taxon>
        <taxon>Dikarya</taxon>
        <taxon>Ascomycota</taxon>
        <taxon>Saccharomycotina</taxon>
        <taxon>Saccharomycetes</taxon>
        <taxon>Saccharomycetales</taxon>
        <taxon>Saccharomycetaceae</taxon>
        <taxon>Saccharomyces</taxon>
    </lineage>
</organism>
<name>CSS1_YEAST</name>
<reference key="1">
    <citation type="journal article" date="1997" name="Nature">
        <title>The nucleotide sequence of Saccharomyces cerevisiae chromosome IX.</title>
        <authorList>
            <person name="Churcher C.M."/>
            <person name="Bowman S."/>
            <person name="Badcock K."/>
            <person name="Bankier A.T."/>
            <person name="Brown D."/>
            <person name="Chillingworth T."/>
            <person name="Connor R."/>
            <person name="Devlin K."/>
            <person name="Gentles S."/>
            <person name="Hamlin N."/>
            <person name="Harris D.E."/>
            <person name="Horsnell T."/>
            <person name="Hunt S."/>
            <person name="Jagels K."/>
            <person name="Jones M."/>
            <person name="Lye G."/>
            <person name="Moule S."/>
            <person name="Odell C."/>
            <person name="Pearson D."/>
            <person name="Rajandream M.A."/>
            <person name="Rice P."/>
            <person name="Rowley N."/>
            <person name="Skelton J."/>
            <person name="Smith V."/>
            <person name="Walsh S.V."/>
            <person name="Whitehead S."/>
            <person name="Barrell B.G."/>
        </authorList>
    </citation>
    <scope>NUCLEOTIDE SEQUENCE [LARGE SCALE GENOMIC DNA]</scope>
    <source>
        <strain>ATCC 204508 / S288c</strain>
    </source>
</reference>
<reference key="2">
    <citation type="journal article" date="2014" name="G3 (Bethesda)">
        <title>The reference genome sequence of Saccharomyces cerevisiae: Then and now.</title>
        <authorList>
            <person name="Engel S.R."/>
            <person name="Dietrich F.S."/>
            <person name="Fisk D.G."/>
            <person name="Binkley G."/>
            <person name="Balakrishnan R."/>
            <person name="Costanzo M.C."/>
            <person name="Dwight S.S."/>
            <person name="Hitz B.C."/>
            <person name="Karra K."/>
            <person name="Nash R.S."/>
            <person name="Weng S."/>
            <person name="Wong E.D."/>
            <person name="Lloyd P."/>
            <person name="Skrzypek M.S."/>
            <person name="Miyasato S.R."/>
            <person name="Simison M."/>
            <person name="Cherry J.M."/>
        </authorList>
    </citation>
    <scope>GENOME REANNOTATION</scope>
    <source>
        <strain>ATCC 204508 / S288c</strain>
    </source>
</reference>
<reference key="3">
    <citation type="journal article" date="2001" name="J. Biol. Chem.">
        <title>Alkaline response genes of Saccharomyces cerevisiae and their relationship to the RIM101 pathway.</title>
        <authorList>
            <person name="Lamb T.M."/>
            <person name="Xu W."/>
            <person name="Diamond A."/>
            <person name="Mitchell A.P."/>
        </authorList>
    </citation>
    <scope>INDUCTION</scope>
</reference>
<reference key="4">
    <citation type="journal article" date="2001" name="Mol. Microbiol.">
        <title>Low external pH induces HOG1-dependent changes in the organization of the Saccharomyces cerevisiae cell wall.</title>
        <authorList>
            <person name="Kapteyn J.C."/>
            <person name="ter Riet B."/>
            <person name="Vink E."/>
            <person name="Blad S."/>
            <person name="De Nobel H."/>
            <person name="Van Den Ende H."/>
            <person name="Klis F.M."/>
        </authorList>
    </citation>
    <scope>INDUCTION</scope>
</reference>
<reference key="5">
    <citation type="journal article" date="2007" name="Appl. Microbiol. Biotechnol.">
        <title>Reducing haziness in white wine by overexpression of Saccharomyces cerevisiae genes YOL155c and YDR055w.</title>
        <authorList>
            <person name="Brown S.L."/>
            <person name="Stockdale V.J."/>
            <person name="Pettolino F."/>
            <person name="Pocock K.F."/>
            <person name="de Barros Lopes M."/>
            <person name="Williams P.J."/>
            <person name="Bacic A."/>
            <person name="Fincher G.B."/>
            <person name="Hoej P.B."/>
            <person name="Waters E.J."/>
        </authorList>
    </citation>
    <scope>IDENTIFICATION</scope>
    <scope>DISRUPTION PHENOTYPE</scope>
    <scope>FUNCTION</scope>
</reference>
<reference key="6">
    <citation type="journal article" date="2016" name="Nat. Methods">
        <title>One library to make them all: streamlining the creation of yeast libraries via a SWAp-Tag strategy.</title>
        <authorList>
            <person name="Yofe I."/>
            <person name="Weill U."/>
            <person name="Meurer M."/>
            <person name="Chuartzman S."/>
            <person name="Zalckvar E."/>
            <person name="Goldman O."/>
            <person name="Ben-Dor S."/>
            <person name="Schuetze C."/>
            <person name="Wiedemann N."/>
            <person name="Knop M."/>
            <person name="Khmelinskii A."/>
            <person name="Schuldiner M."/>
        </authorList>
    </citation>
    <scope>SUBCELLULAR LOCATION</scope>
</reference>
<proteinExistence type="evidence at transcript level"/>
<sequence length="995" mass="99736">MFNRLNKFQAALALALYSQSALGQYYSNSTSISSNSSSTSVVSSSSGSVSISSSIAETSSSATDILSSITQSASSTSGVSSSVGPSSSSVVSSSVSQSSSSVSDVSSSVSQSSSSASDVSSSVSQSASSTSDVSSSVSQSSSSASDVSSSVSQSSSSASDVSSSVSQSASSASDVSSSVSQSASSTSDVSSSVSQSSSSASDVSSSVSQSSSSASDVSSSVSQSASSTSDVSSSVSQSASSTSGVSSSGSQSVSSASGSSSSFPQSTSSASTASGSATSNSLSSITSSASSASATASNSLSSSDGTIYLPTTTISGDLTLTGKVIATEGVVVAAGAKLTLLDGDKYSFSADLKVYGDLLVKKSKETYPGTEFDISGENFDVTGNFNAEESAATSASIYSFTPSSFDNSGDISLSLSKSKKGEVTFSPYSNSGAFSFSNAILNGGSVSGLQRRDDTEGSVNNGEINLDNGSTYVIVEPVSGKGTVNIISGNLYLHYPDTFTGQTVVFKGEGVLAVDPTETNATPIPVVGYTGKNQIAITADITALSYDGTTGVLTATQGNRQFSFAIGTGFSSSDFSVSEGIFAGAYAYYLNYNGVVATSAASSSTASGASASVTGSTSFGASVTGSTASTSFGASVTGSTASTSFGASVTGSTSVYTTTLDYVNATSTVVVSCSETTDSNGNVYTITTTVPCSSTTATITSCDETGCHVSTSTGAVVTETVSSKSYTTATVTHCDDNGCNTKTVTSECSKETSATTASPKSYTTVTVTHCDDNGCNTKTVTSEAPEATTTTTVSSQSYTTATVTHCDDNGCKTKTVTSEAPEATTTTVSPKTYTTATVTQCDDNGCSTKTVTSECPEETSATTTSPKSYTTVTVTHCDDNGCNTKTVTSEAPEATTTTVSPKTYTTATVTQCDDNGCSTKTVTSEAPKETSETSETSAAPKDIHYCHWLLNGDDNGCNVKIITSKIPEATSTVTQLVLLQSHTLLSLLRVLKQPH</sequence>